<proteinExistence type="inferred from homology"/>
<keyword id="KW-0678">Repressor</keyword>
<keyword id="KW-0346">Stress response</keyword>
<keyword id="KW-0804">Transcription</keyword>
<keyword id="KW-0805">Transcription regulation</keyword>
<name>HRCA_THENN</name>
<gene>
    <name evidence="1" type="primary">hrcA</name>
    <name type="ordered locus">CTN_1724</name>
</gene>
<protein>
    <recommendedName>
        <fullName evidence="1">Heat-inducible transcription repressor HrcA</fullName>
    </recommendedName>
</protein>
<sequence length="339" mass="39504">MRRLSNKGEHQRNLNDRQRKVLYCIVKEYIENKKPVSSQRVLEVSNINFSSATIRNDMKKLEYLGYIYQPHTSAGRVPTDKGLRFYYEEMVKLSKETEELNLEVDTFRSIPLADPEKVLLLAGNLLARLAEGYVLIERPNPRDLKILRVMLIPVSEDYLIFSILTEFGISKITPIRIHEDLNWEEIERQLNFLLRGRTVEDVLTGKVETLRGSGILKLIESVMNEKLERYIDVGFENLLKDDTLSLEDIKHLLEEIKDHRFLESLIGNDKDVTVKIGKEIGSKKLERFAVFSGRYYKGSSPIGSVHLFTSKITRYDRNHRVFNYVLNRLSEYFTSAARR</sequence>
<organism>
    <name type="scientific">Thermotoga neapolitana (strain ATCC 49049 / DSM 4359 / NBRC 107923 / NS-E)</name>
    <dbReference type="NCBI Taxonomy" id="309803"/>
    <lineage>
        <taxon>Bacteria</taxon>
        <taxon>Thermotogati</taxon>
        <taxon>Thermotogota</taxon>
        <taxon>Thermotogae</taxon>
        <taxon>Thermotogales</taxon>
        <taxon>Thermotogaceae</taxon>
        <taxon>Thermotoga</taxon>
    </lineage>
</organism>
<dbReference type="EMBL" id="CP000916">
    <property type="protein sequence ID" value="ACM23900.1"/>
    <property type="molecule type" value="Genomic_DNA"/>
</dbReference>
<dbReference type="RefSeq" id="WP_015920138.1">
    <property type="nucleotide sequence ID" value="NC_011978.1"/>
</dbReference>
<dbReference type="SMR" id="B9KAB7"/>
<dbReference type="STRING" id="309803.CTN_1724"/>
<dbReference type="KEGG" id="tna:CTN_1724"/>
<dbReference type="eggNOG" id="COG1420">
    <property type="taxonomic scope" value="Bacteria"/>
</dbReference>
<dbReference type="HOGENOM" id="CLU_050019_1_0_0"/>
<dbReference type="Proteomes" id="UP000000445">
    <property type="component" value="Chromosome"/>
</dbReference>
<dbReference type="GO" id="GO:0003677">
    <property type="term" value="F:DNA binding"/>
    <property type="evidence" value="ECO:0007669"/>
    <property type="project" value="InterPro"/>
</dbReference>
<dbReference type="GO" id="GO:0045892">
    <property type="term" value="P:negative regulation of DNA-templated transcription"/>
    <property type="evidence" value="ECO:0007669"/>
    <property type="project" value="UniProtKB-UniRule"/>
</dbReference>
<dbReference type="Gene3D" id="3.30.450.40">
    <property type="match status" value="1"/>
</dbReference>
<dbReference type="Gene3D" id="3.30.390.60">
    <property type="entry name" value="Heat-inducible transcription repressor hrca homolog, domain 3"/>
    <property type="match status" value="1"/>
</dbReference>
<dbReference type="Gene3D" id="1.10.10.10">
    <property type="entry name" value="Winged helix-like DNA-binding domain superfamily/Winged helix DNA-binding domain"/>
    <property type="match status" value="1"/>
</dbReference>
<dbReference type="HAMAP" id="MF_00081">
    <property type="entry name" value="HrcA"/>
    <property type="match status" value="1"/>
</dbReference>
<dbReference type="InterPro" id="IPR029016">
    <property type="entry name" value="GAF-like_dom_sf"/>
</dbReference>
<dbReference type="InterPro" id="IPR002571">
    <property type="entry name" value="HrcA"/>
</dbReference>
<dbReference type="InterPro" id="IPR021153">
    <property type="entry name" value="HrcA_C"/>
</dbReference>
<dbReference type="InterPro" id="IPR036388">
    <property type="entry name" value="WH-like_DNA-bd_sf"/>
</dbReference>
<dbReference type="InterPro" id="IPR036390">
    <property type="entry name" value="WH_DNA-bd_sf"/>
</dbReference>
<dbReference type="InterPro" id="IPR005104">
    <property type="entry name" value="WHTH_HrcA_DNA-bd"/>
</dbReference>
<dbReference type="InterPro" id="IPR023120">
    <property type="entry name" value="WHTH_transcript_rep_HrcA_IDD"/>
</dbReference>
<dbReference type="NCBIfam" id="TIGR00331">
    <property type="entry name" value="hrcA"/>
    <property type="match status" value="1"/>
</dbReference>
<dbReference type="PANTHER" id="PTHR34824">
    <property type="entry name" value="HEAT-INDUCIBLE TRANSCRIPTION REPRESSOR HRCA"/>
    <property type="match status" value="1"/>
</dbReference>
<dbReference type="PANTHER" id="PTHR34824:SF1">
    <property type="entry name" value="HEAT-INDUCIBLE TRANSCRIPTION REPRESSOR HRCA"/>
    <property type="match status" value="1"/>
</dbReference>
<dbReference type="Pfam" id="PF01628">
    <property type="entry name" value="HrcA"/>
    <property type="match status" value="1"/>
</dbReference>
<dbReference type="Pfam" id="PF03444">
    <property type="entry name" value="HrcA_DNA-bdg"/>
    <property type="match status" value="1"/>
</dbReference>
<dbReference type="PIRSF" id="PIRSF005485">
    <property type="entry name" value="HrcA"/>
    <property type="match status" value="1"/>
</dbReference>
<dbReference type="SUPFAM" id="SSF55781">
    <property type="entry name" value="GAF domain-like"/>
    <property type="match status" value="1"/>
</dbReference>
<dbReference type="SUPFAM" id="SSF46785">
    <property type="entry name" value="Winged helix' DNA-binding domain"/>
    <property type="match status" value="1"/>
</dbReference>
<reference key="1">
    <citation type="submission" date="2007-11" db="EMBL/GenBank/DDBJ databases">
        <title>The genome sequence of the hyperthermophilic bacterium Thermotoga neapolitana.</title>
        <authorList>
            <person name="Lim S.K."/>
            <person name="Kim J.S."/>
            <person name="Cha S.H."/>
            <person name="Park B.C."/>
            <person name="Lee D.S."/>
            <person name="Tae H.S."/>
            <person name="Kim S.-J."/>
            <person name="Kim J.J."/>
            <person name="Park K.J."/>
            <person name="Lee S.Y."/>
        </authorList>
    </citation>
    <scope>NUCLEOTIDE SEQUENCE [LARGE SCALE GENOMIC DNA]</scope>
    <source>
        <strain>ATCC 49049 / DSM 4359 / NBRC 107923 / NS-E</strain>
    </source>
</reference>
<feature type="chain" id="PRO_1000118323" description="Heat-inducible transcription repressor HrcA">
    <location>
        <begin position="1"/>
        <end position="339"/>
    </location>
</feature>
<evidence type="ECO:0000255" key="1">
    <source>
        <dbReference type="HAMAP-Rule" id="MF_00081"/>
    </source>
</evidence>
<comment type="function">
    <text evidence="1">Negative regulator of class I heat shock genes (grpE-dnaK-dnaJ and groELS operons). Prevents heat-shock induction of these operons.</text>
</comment>
<comment type="similarity">
    <text evidence="1">Belongs to the HrcA family.</text>
</comment>
<accession>B9KAB7</accession>